<evidence type="ECO:0000255" key="1">
    <source>
        <dbReference type="HAMAP-Rule" id="MF_03148"/>
    </source>
</evidence>
<gene>
    <name evidence="1" type="primary">HAM1</name>
    <name type="ORF">CAWG_04758</name>
</gene>
<accession>C4YRQ5</accession>
<feature type="chain" id="PRO_0000413131" description="Inosine triphosphate pyrophosphatase">
    <location>
        <begin position="1"/>
        <end position="202"/>
    </location>
</feature>
<feature type="binding site" evidence="1">
    <location>
        <begin position="8"/>
        <end position="13"/>
    </location>
    <ligand>
        <name>ITP</name>
        <dbReference type="ChEBI" id="CHEBI:61402"/>
    </ligand>
</feature>
<feature type="binding site" evidence="1">
    <location>
        <position position="55"/>
    </location>
    <ligand>
        <name>Mg(2+)</name>
        <dbReference type="ChEBI" id="CHEBI:18420"/>
    </ligand>
</feature>
<feature type="binding site" evidence="1">
    <location>
        <position position="67"/>
    </location>
    <ligand>
        <name>ITP</name>
        <dbReference type="ChEBI" id="CHEBI:61402"/>
    </ligand>
</feature>
<feature type="binding site" evidence="1">
    <location>
        <begin position="83"/>
        <end position="84"/>
    </location>
    <ligand>
        <name>ITP</name>
        <dbReference type="ChEBI" id="CHEBI:61402"/>
    </ligand>
</feature>
<feature type="binding site" evidence="1">
    <location>
        <position position="100"/>
    </location>
    <ligand>
        <name>ITP</name>
        <dbReference type="ChEBI" id="CHEBI:61402"/>
    </ligand>
</feature>
<feature type="binding site" evidence="1">
    <location>
        <begin position="159"/>
        <end position="162"/>
    </location>
    <ligand>
        <name>ITP</name>
        <dbReference type="ChEBI" id="CHEBI:61402"/>
    </ligand>
</feature>
<feature type="binding site" evidence="1">
    <location>
        <position position="182"/>
    </location>
    <ligand>
        <name>ITP</name>
        <dbReference type="ChEBI" id="CHEBI:61402"/>
    </ligand>
</feature>
<feature type="binding site" evidence="1">
    <location>
        <begin position="187"/>
        <end position="188"/>
    </location>
    <ligand>
        <name>ITP</name>
        <dbReference type="ChEBI" id="CHEBI:61402"/>
    </ligand>
</feature>
<dbReference type="EC" id="3.6.1.66" evidence="1"/>
<dbReference type="EMBL" id="CM000311">
    <property type="protein sequence ID" value="EEQ46408.1"/>
    <property type="molecule type" value="Genomic_DNA"/>
</dbReference>
<dbReference type="SMR" id="C4YRQ5"/>
<dbReference type="PaxDb" id="5476-C4YRQ5"/>
<dbReference type="VEuPathDB" id="FungiDB:CAWG_04758"/>
<dbReference type="HOGENOM" id="CLU_082080_1_1_1"/>
<dbReference type="OMA" id="YDPIFQP"/>
<dbReference type="OrthoDB" id="2134at766764"/>
<dbReference type="Proteomes" id="UP000001429">
    <property type="component" value="Chromosome 5"/>
</dbReference>
<dbReference type="GO" id="GO:0005737">
    <property type="term" value="C:cytoplasm"/>
    <property type="evidence" value="ECO:0007669"/>
    <property type="project" value="UniProtKB-SubCell"/>
</dbReference>
<dbReference type="GO" id="GO:0005634">
    <property type="term" value="C:nucleus"/>
    <property type="evidence" value="ECO:0007669"/>
    <property type="project" value="UniProtKB-SubCell"/>
</dbReference>
<dbReference type="GO" id="GO:0035870">
    <property type="term" value="F:dITP diphosphatase activity"/>
    <property type="evidence" value="ECO:0007669"/>
    <property type="project" value="RHEA"/>
</dbReference>
<dbReference type="GO" id="GO:0036220">
    <property type="term" value="F:ITP diphosphatase activity"/>
    <property type="evidence" value="ECO:0007669"/>
    <property type="project" value="RHEA"/>
</dbReference>
<dbReference type="GO" id="GO:0046872">
    <property type="term" value="F:metal ion binding"/>
    <property type="evidence" value="ECO:0007669"/>
    <property type="project" value="UniProtKB-KW"/>
</dbReference>
<dbReference type="GO" id="GO:0000166">
    <property type="term" value="F:nucleotide binding"/>
    <property type="evidence" value="ECO:0007669"/>
    <property type="project" value="UniProtKB-KW"/>
</dbReference>
<dbReference type="GO" id="GO:0036222">
    <property type="term" value="F:XTP diphosphatase activity"/>
    <property type="evidence" value="ECO:0007669"/>
    <property type="project" value="RHEA"/>
</dbReference>
<dbReference type="GO" id="GO:0009204">
    <property type="term" value="P:deoxyribonucleoside triphosphate catabolic process"/>
    <property type="evidence" value="ECO:0007669"/>
    <property type="project" value="UniProtKB-UniRule"/>
</dbReference>
<dbReference type="GO" id="GO:0009117">
    <property type="term" value="P:nucleotide metabolic process"/>
    <property type="evidence" value="ECO:0007669"/>
    <property type="project" value="UniProtKB-KW"/>
</dbReference>
<dbReference type="CDD" id="cd00515">
    <property type="entry name" value="HAM1"/>
    <property type="match status" value="1"/>
</dbReference>
<dbReference type="FunFam" id="3.90.950.10:FF:000009">
    <property type="entry name" value="Inosine triphosphate pyrophosphatase"/>
    <property type="match status" value="1"/>
</dbReference>
<dbReference type="Gene3D" id="3.90.950.10">
    <property type="match status" value="1"/>
</dbReference>
<dbReference type="HAMAP" id="MF_03148">
    <property type="entry name" value="HAM1_NTPase"/>
    <property type="match status" value="1"/>
</dbReference>
<dbReference type="InterPro" id="IPR027502">
    <property type="entry name" value="ITPase"/>
</dbReference>
<dbReference type="InterPro" id="IPR029001">
    <property type="entry name" value="ITPase-like_fam"/>
</dbReference>
<dbReference type="InterPro" id="IPR002637">
    <property type="entry name" value="RdgB/HAM1"/>
</dbReference>
<dbReference type="NCBIfam" id="TIGR00042">
    <property type="entry name" value="RdgB/HAM1 family non-canonical purine NTP pyrophosphatase"/>
    <property type="match status" value="1"/>
</dbReference>
<dbReference type="PANTHER" id="PTHR11067:SF9">
    <property type="entry name" value="INOSINE TRIPHOSPHATE PYROPHOSPHATASE"/>
    <property type="match status" value="1"/>
</dbReference>
<dbReference type="PANTHER" id="PTHR11067">
    <property type="entry name" value="INOSINE TRIPHOSPHATE PYROPHOSPHATASE/HAM1 PROTEIN"/>
    <property type="match status" value="1"/>
</dbReference>
<dbReference type="Pfam" id="PF01725">
    <property type="entry name" value="Ham1p_like"/>
    <property type="match status" value="1"/>
</dbReference>
<dbReference type="SUPFAM" id="SSF52972">
    <property type="entry name" value="ITPase-like"/>
    <property type="match status" value="1"/>
</dbReference>
<comment type="function">
    <text evidence="1">Pyrophosphatase that hydrolyzes non-canonical purine nucleotides such as inosine triphosphate (ITP), deoxyinosine triphosphate (dITP) or xanthosine 5'-triphosphate (XTP) to their respective monophosphate derivatives. The enzyme does not distinguish between the deoxy- and ribose forms. Probably excludes non-canonical purines from RNA and DNA precursor pools, thus preventing their incorporation into RNA and DNA and avoiding chromosomal lesions.</text>
</comment>
<comment type="catalytic activity">
    <reaction evidence="1">
        <text>ITP + H2O = IMP + diphosphate + H(+)</text>
        <dbReference type="Rhea" id="RHEA:29399"/>
        <dbReference type="ChEBI" id="CHEBI:15377"/>
        <dbReference type="ChEBI" id="CHEBI:15378"/>
        <dbReference type="ChEBI" id="CHEBI:33019"/>
        <dbReference type="ChEBI" id="CHEBI:58053"/>
        <dbReference type="ChEBI" id="CHEBI:61402"/>
        <dbReference type="EC" id="3.6.1.66"/>
    </reaction>
    <physiologicalReaction direction="left-to-right" evidence="1">
        <dbReference type="Rhea" id="RHEA:29400"/>
    </physiologicalReaction>
</comment>
<comment type="catalytic activity">
    <reaction evidence="1">
        <text>dITP + H2O = dIMP + diphosphate + H(+)</text>
        <dbReference type="Rhea" id="RHEA:28342"/>
        <dbReference type="ChEBI" id="CHEBI:15377"/>
        <dbReference type="ChEBI" id="CHEBI:15378"/>
        <dbReference type="ChEBI" id="CHEBI:33019"/>
        <dbReference type="ChEBI" id="CHEBI:61194"/>
        <dbReference type="ChEBI" id="CHEBI:61382"/>
        <dbReference type="EC" id="3.6.1.66"/>
    </reaction>
    <physiologicalReaction direction="left-to-right" evidence="1">
        <dbReference type="Rhea" id="RHEA:28343"/>
    </physiologicalReaction>
</comment>
<comment type="catalytic activity">
    <reaction evidence="1">
        <text>XTP + H2O = XMP + diphosphate + H(+)</text>
        <dbReference type="Rhea" id="RHEA:28610"/>
        <dbReference type="ChEBI" id="CHEBI:15377"/>
        <dbReference type="ChEBI" id="CHEBI:15378"/>
        <dbReference type="ChEBI" id="CHEBI:33019"/>
        <dbReference type="ChEBI" id="CHEBI:57464"/>
        <dbReference type="ChEBI" id="CHEBI:61314"/>
        <dbReference type="EC" id="3.6.1.66"/>
    </reaction>
    <physiologicalReaction direction="left-to-right" evidence="1">
        <dbReference type="Rhea" id="RHEA:28611"/>
    </physiologicalReaction>
</comment>
<comment type="cofactor">
    <cofactor evidence="1">
        <name>Mg(2+)</name>
        <dbReference type="ChEBI" id="CHEBI:18420"/>
    </cofactor>
    <cofactor evidence="1">
        <name>Mn(2+)</name>
        <dbReference type="ChEBI" id="CHEBI:29035"/>
    </cofactor>
    <text evidence="1">Binds 1 divalent metal cation per subunit; can use either Mg(2+) or Mn(2+).</text>
</comment>
<comment type="subunit">
    <text evidence="1">Homodimer.</text>
</comment>
<comment type="subcellular location">
    <subcellularLocation>
        <location evidence="1">Cytoplasm</location>
    </subcellularLocation>
    <subcellularLocation>
        <location evidence="1">Nucleus</location>
    </subcellularLocation>
</comment>
<comment type="similarity">
    <text evidence="1">Belongs to the HAM1 NTPase family.</text>
</comment>
<keyword id="KW-0963">Cytoplasm</keyword>
<keyword id="KW-0378">Hydrolase</keyword>
<keyword id="KW-0460">Magnesium</keyword>
<keyword id="KW-0464">Manganese</keyword>
<keyword id="KW-0479">Metal-binding</keyword>
<keyword id="KW-0546">Nucleotide metabolism</keyword>
<keyword id="KW-0547">Nucleotide-binding</keyword>
<keyword id="KW-0539">Nucleus</keyword>
<protein>
    <recommendedName>
        <fullName evidence="1">Inosine triphosphate pyrophosphatase</fullName>
        <shortName evidence="1">ITPase</shortName>
        <shortName evidence="1">Inosine triphosphatase</shortName>
        <ecNumber evidence="1">3.6.1.66</ecNumber>
    </recommendedName>
    <alternativeName>
        <fullName evidence="1">Non-canonical purine NTP pyrophosphatase</fullName>
    </alternativeName>
    <alternativeName>
        <fullName evidence="1">Non-standard purine NTP pyrophosphatase</fullName>
    </alternativeName>
    <alternativeName>
        <fullName evidence="1">Nucleoside-triphosphate diphosphatase</fullName>
    </alternativeName>
    <alternativeName>
        <fullName evidence="1">Nucleoside-triphosphate pyrophosphatase</fullName>
        <shortName evidence="1">NTPase</shortName>
    </alternativeName>
    <alternativeName>
        <fullName evidence="1">XTP/dITP diphosphatase</fullName>
    </alternativeName>
</protein>
<organism>
    <name type="scientific">Candida albicans (strain WO-1)</name>
    <name type="common">Yeast</name>
    <dbReference type="NCBI Taxonomy" id="294748"/>
    <lineage>
        <taxon>Eukaryota</taxon>
        <taxon>Fungi</taxon>
        <taxon>Dikarya</taxon>
        <taxon>Ascomycota</taxon>
        <taxon>Saccharomycotina</taxon>
        <taxon>Pichiomycetes</taxon>
        <taxon>Debaryomycetaceae</taxon>
        <taxon>Candida/Lodderomyces clade</taxon>
        <taxon>Candida</taxon>
    </lineage>
</organism>
<name>ITPA_CANAW</name>
<sequence length="202" mass="22036">MSTITFVTGNANKLKEVIAILASSETDSSSSSSSLSSSNKVGKFTITNQSVDLDEVQGTIEQVTIHKAQAAAKVIDGPVLVEDTCLGFNAFNDLPGPYIKWFVQSIGLTGLVKMLIGFEDKSAKAICTFGYCEGPDKEVKIFQGITEGKIVDSRGPTNFGWDSIFQPNGFEQTYAEMDKKVKNSISHRYKALDKVRDYLLSQ</sequence>
<reference key="1">
    <citation type="journal article" date="2009" name="Nature">
        <title>Evolution of pathogenicity and sexual reproduction in eight Candida genomes.</title>
        <authorList>
            <person name="Butler G."/>
            <person name="Rasmussen M.D."/>
            <person name="Lin M.F."/>
            <person name="Santos M.A.S."/>
            <person name="Sakthikumar S."/>
            <person name="Munro C.A."/>
            <person name="Rheinbay E."/>
            <person name="Grabherr M."/>
            <person name="Forche A."/>
            <person name="Reedy J.L."/>
            <person name="Agrafioti I."/>
            <person name="Arnaud M.B."/>
            <person name="Bates S."/>
            <person name="Brown A.J.P."/>
            <person name="Brunke S."/>
            <person name="Costanzo M.C."/>
            <person name="Fitzpatrick D.A."/>
            <person name="de Groot P.W.J."/>
            <person name="Harris D."/>
            <person name="Hoyer L.L."/>
            <person name="Hube B."/>
            <person name="Klis F.M."/>
            <person name="Kodira C."/>
            <person name="Lennard N."/>
            <person name="Logue M.E."/>
            <person name="Martin R."/>
            <person name="Neiman A.M."/>
            <person name="Nikolaou E."/>
            <person name="Quail M.A."/>
            <person name="Quinn J."/>
            <person name="Santos M.C."/>
            <person name="Schmitzberger F.F."/>
            <person name="Sherlock G."/>
            <person name="Shah P."/>
            <person name="Silverstein K.A.T."/>
            <person name="Skrzypek M.S."/>
            <person name="Soll D."/>
            <person name="Staggs R."/>
            <person name="Stansfield I."/>
            <person name="Stumpf M.P.H."/>
            <person name="Sudbery P.E."/>
            <person name="Srikantha T."/>
            <person name="Zeng Q."/>
            <person name="Berman J."/>
            <person name="Berriman M."/>
            <person name="Heitman J."/>
            <person name="Gow N.A.R."/>
            <person name="Lorenz M.C."/>
            <person name="Birren B.W."/>
            <person name="Kellis M."/>
            <person name="Cuomo C.A."/>
        </authorList>
    </citation>
    <scope>NUCLEOTIDE SEQUENCE [LARGE SCALE GENOMIC DNA]</scope>
    <source>
        <strain>WO-1</strain>
    </source>
</reference>
<proteinExistence type="inferred from homology"/>